<comment type="similarity">
    <text evidence="1">Belongs to the coronaviruses ns4/ns4.8 protein family.</text>
</comment>
<comment type="sequence caution" evidence="1">
    <conflict type="frameshift">
        <sequence resource="EMBL-CDS" id="AAL40402"/>
    </conflict>
</comment>
<gene>
    <name type="ORF">4b</name>
</gene>
<proteinExistence type="inferred from homology"/>
<protein>
    <recommendedName>
        <fullName>Non-structural protein of 4.8 kDa</fullName>
        <shortName>ns4.8</shortName>
    </recommendedName>
    <alternativeName>
        <fullName>4.8 kDa accessory protein</fullName>
    </alternativeName>
</protein>
<sequence>MPMATTIDGTDYTNIMPSTVSTRVYLGCSIGIDTSTTGFTCFSWY</sequence>
<dbReference type="EMBL" id="AF220295">
    <property type="protein sequence ID" value="AAL40402.1"/>
    <property type="status" value="ALT_FRAME"/>
    <property type="molecule type" value="Genomic_RNA"/>
</dbReference>
<dbReference type="EMBL" id="AF239312">
    <property type="protein sequence ID" value="AAG40607.1"/>
    <property type="molecule type" value="Genomic_RNA"/>
</dbReference>
<dbReference type="EMBL" id="AH010256">
    <property type="protein sequence ID" value="AAK01073.1"/>
    <property type="molecule type" value="Genomic_RNA"/>
</dbReference>
<dbReference type="EMBL" id="AH010061">
    <property type="protein sequence ID" value="AAG40597.1"/>
    <property type="molecule type" value="Genomic_RNA"/>
</dbReference>
<dbReference type="EMBL" id="AH010363">
    <property type="protein sequence ID" value="AAK01077.1"/>
    <property type="molecule type" value="Genomic_RNA"/>
</dbReference>
<dbReference type="EMBL" id="AH010062">
    <property type="protein sequence ID" value="AAG40603.1"/>
    <property type="molecule type" value="Genomic_RNA"/>
</dbReference>
<dbReference type="Proteomes" id="UP000008572">
    <property type="component" value="Genome"/>
</dbReference>
<dbReference type="InterPro" id="IPR005603">
    <property type="entry name" value="Corona_NS4"/>
</dbReference>
<dbReference type="Pfam" id="PF03905">
    <property type="entry name" value="Corona_NS4"/>
    <property type="match status" value="1"/>
</dbReference>
<name>NS48_CVBQ</name>
<feature type="chain" id="PRO_0000283964" description="Non-structural protein of 4.8 kDa">
    <location>
        <begin position="1"/>
        <end position="45"/>
    </location>
</feature>
<feature type="sequence variant" description="In strain: Isolate BCQ.3994.">
    <original>DGT</original>
    <variation>EVA</variation>
    <location>
        <begin position="8"/>
        <end position="10"/>
    </location>
</feature>
<feature type="sequence variant" description="In strain: Isolate BCQ.571, Isolate BCQ.1523, Isolate BCQ.2590, Isolate BCQ.3994 and Isolate BCQ.7373.">
    <original>S</original>
    <variation>I</variation>
    <location>
        <position position="18"/>
    </location>
</feature>
<feature type="sequence variant" description="In strain: Isolate BCQ.571, Isolate BCQ.1523, Isolate BCQ.2590 and Isolate BCQ.7373.">
    <original>STR</original>
    <variation>FTT</variation>
    <location>
        <begin position="21"/>
        <end position="23"/>
    </location>
</feature>
<feature type="sequence variant" description="In strain: Isolate BCQ.3994.">
    <original>TR</original>
    <variation>IT</variation>
    <location>
        <begin position="22"/>
        <end position="23"/>
    </location>
</feature>
<feature type="sequence variant" description="In strain: Isolate BCQ.571, Isolate BCQ.1523, Isolate BCQ.3994, Isolate BCQ.2590 and Isolate BCQ.7373.">
    <original>C</original>
    <variation>V</variation>
    <location>
        <position position="28"/>
    </location>
</feature>
<feature type="sequence variant" description="In strain: Isolate BCQ.1523.">
    <original>S</original>
    <variation>F</variation>
    <location>
        <position position="29"/>
    </location>
</feature>
<feature type="sequence variant" description="In strain: Isolate BCQ.1523, Isolate BCQ.3994 and Isolate BCQ.7373.">
    <original>W</original>
    <variation>R</variation>
    <location>
        <position position="44"/>
    </location>
</feature>
<reference key="1">
    <citation type="journal article" date="2001" name="Adv. Exp. Med. Biol.">
        <title>Full-length genomic sequence of bovine coronavirus (31 kb). Completion of the open reading frame 1a/1b sequences.</title>
        <authorList>
            <person name="Yoo D."/>
            <person name="Pei Y."/>
        </authorList>
    </citation>
    <scope>NUCLEOTIDE SEQUENCE [GENOMIC RNA]</scope>
</reference>
<reference key="2">
    <citation type="journal article" date="2001" name="Virus Res.">
        <title>Bovine coronaviruses associated with enteric and respiratory diseases in Canadian dairy cattle display different reactivities to anti-HE monoclonal antibodies and distinct amino acid changes in their HE, S and ns4.9 protein.</title>
        <authorList>
            <person name="Gelinas A.-M."/>
            <person name="Boutin M."/>
            <person name="Sasseville A.M.-J."/>
            <person name="Dea S."/>
        </authorList>
    </citation>
    <scope>NUCLEOTIDE SEQUENCE [GENOMIC RNA]</scope>
    <source>
        <strain>Isolate BCQ.1523</strain>
        <strain>Isolate BCQ.2590</strain>
        <strain>Isolate BCQ.3994</strain>
        <strain>Isolate BCQ.571</strain>
        <strain>Isolate BCQ.7373</strain>
    </source>
</reference>
<organismHost>
    <name type="scientific">Bos taurus</name>
    <name type="common">Bovine</name>
    <dbReference type="NCBI Taxonomy" id="9913"/>
</organismHost>
<organism>
    <name type="scientific">Bovine coronavirus (strain Quebec)</name>
    <name type="common">BCoV</name>
    <name type="synonym">BCV</name>
    <dbReference type="NCBI Taxonomy" id="11133"/>
    <lineage>
        <taxon>Viruses</taxon>
        <taxon>Riboviria</taxon>
        <taxon>Orthornavirae</taxon>
        <taxon>Pisuviricota</taxon>
        <taxon>Pisoniviricetes</taxon>
        <taxon>Nidovirales</taxon>
        <taxon>Cornidovirineae</taxon>
        <taxon>Coronaviridae</taxon>
        <taxon>Orthocoronavirinae</taxon>
        <taxon>Betacoronavirus</taxon>
        <taxon>Embecovirus</taxon>
        <taxon>Betacoronavirus 1</taxon>
    </lineage>
</organism>
<evidence type="ECO:0000305" key="1"/>
<accession>Q8V6W4</accession>
<accession>Q995Z7</accession>
<accession>Q9DGZ6</accession>
<accession>Q9DR79</accession>
<accession>Q9QAQ6</accession>